<organism>
    <name type="scientific">Arabidopsis thaliana</name>
    <name type="common">Mouse-ear cress</name>
    <dbReference type="NCBI Taxonomy" id="3702"/>
    <lineage>
        <taxon>Eukaryota</taxon>
        <taxon>Viridiplantae</taxon>
        <taxon>Streptophyta</taxon>
        <taxon>Embryophyta</taxon>
        <taxon>Tracheophyta</taxon>
        <taxon>Spermatophyta</taxon>
        <taxon>Magnoliopsida</taxon>
        <taxon>eudicotyledons</taxon>
        <taxon>Gunneridae</taxon>
        <taxon>Pentapetalae</taxon>
        <taxon>rosids</taxon>
        <taxon>malvids</taxon>
        <taxon>Brassicales</taxon>
        <taxon>Brassicaceae</taxon>
        <taxon>Camelineae</taxon>
        <taxon>Arabidopsis</taxon>
    </lineage>
</organism>
<keyword id="KW-0067">ATP-binding</keyword>
<keyword id="KW-0150">Chloroplast</keyword>
<keyword id="KW-0217">Developmental protein</keyword>
<keyword id="KW-0903">Direct protein sequencing</keyword>
<keyword id="KW-0378">Hydrolase</keyword>
<keyword id="KW-0472">Membrane</keyword>
<keyword id="KW-0479">Metal-binding</keyword>
<keyword id="KW-0482">Metalloprotease</keyword>
<keyword id="KW-0547">Nucleotide-binding</keyword>
<keyword id="KW-0934">Plastid</keyword>
<keyword id="KW-0645">Protease</keyword>
<keyword id="KW-1185">Reference proteome</keyword>
<keyword id="KW-0793">Thylakoid</keyword>
<keyword id="KW-0809">Transit peptide</keyword>
<keyword id="KW-0812">Transmembrane</keyword>
<keyword id="KW-1133">Transmembrane helix</keyword>
<keyword id="KW-0832">Ubl conjugation</keyword>
<keyword id="KW-0862">Zinc</keyword>
<feature type="transit peptide" description="Chloroplast" evidence="2">
    <location>
        <begin position="1"/>
        <end position="47"/>
    </location>
</feature>
<feature type="transit peptide" description="Thylakoid" evidence="15">
    <location>
        <begin position="48"/>
        <end position="82"/>
    </location>
</feature>
<feature type="chain" id="PRO_0000341328" description="ATP-dependent zinc metalloprotease FTSH 2, chloroplastic">
    <location>
        <begin position="83"/>
        <end position="695"/>
    </location>
</feature>
<feature type="topological domain" description="Lumenal, thylakoid" evidence="2">
    <location>
        <begin position="83"/>
        <end position="167"/>
    </location>
</feature>
<feature type="transmembrane region" description="Helical" evidence="2">
    <location>
        <begin position="168"/>
        <end position="188"/>
    </location>
</feature>
<feature type="topological domain" description="Stromal" evidence="2">
    <location>
        <begin position="189"/>
        <end position="695"/>
    </location>
</feature>
<feature type="region of interest" description="Disordered" evidence="3">
    <location>
        <begin position="673"/>
        <end position="695"/>
    </location>
</feature>
<feature type="compositionally biased region" description="Low complexity" evidence="3">
    <location>
        <begin position="679"/>
        <end position="695"/>
    </location>
</feature>
<feature type="active site" evidence="1">
    <location>
        <position position="489"/>
    </location>
</feature>
<feature type="binding site" evidence="2">
    <location>
        <begin position="267"/>
        <end position="274"/>
    </location>
    <ligand>
        <name>ATP</name>
        <dbReference type="ChEBI" id="CHEBI:30616"/>
    </ligand>
</feature>
<feature type="binding site" evidence="1">
    <location>
        <position position="488"/>
    </location>
    <ligand>
        <name>Zn(2+)</name>
        <dbReference type="ChEBI" id="CHEBI:29105"/>
        <note>catalytic</note>
    </ligand>
</feature>
<feature type="binding site" evidence="1">
    <location>
        <position position="492"/>
    </location>
    <ligand>
        <name>Zn(2+)</name>
        <dbReference type="ChEBI" id="CHEBI:29105"/>
        <note>catalytic</note>
    </ligand>
</feature>
<feature type="binding site" evidence="1">
    <location>
        <position position="566"/>
    </location>
    <ligand>
        <name>Zn(2+)</name>
        <dbReference type="ChEBI" id="CHEBI:29105"/>
        <note>catalytic</note>
    </ligand>
</feature>
<dbReference type="EC" id="3.4.24.-"/>
<dbReference type="EMBL" id="AF135189">
    <property type="protein sequence ID" value="AAF65925.1"/>
    <property type="molecule type" value="mRNA"/>
</dbReference>
<dbReference type="EMBL" id="AC004669">
    <property type="protein sequence ID" value="AAC20729.1"/>
    <property type="molecule type" value="Genomic_DNA"/>
</dbReference>
<dbReference type="EMBL" id="CP002685">
    <property type="protein sequence ID" value="AEC08466.1"/>
    <property type="molecule type" value="Genomic_DNA"/>
</dbReference>
<dbReference type="EMBL" id="CP002685">
    <property type="protein sequence ID" value="ANM61283.1"/>
    <property type="molecule type" value="Genomic_DNA"/>
</dbReference>
<dbReference type="EMBL" id="CP002685">
    <property type="protein sequence ID" value="ANM61284.1"/>
    <property type="molecule type" value="Genomic_DNA"/>
</dbReference>
<dbReference type="EMBL" id="AY045599">
    <property type="protein sequence ID" value="AAK73957.1"/>
    <property type="status" value="ALT_INIT"/>
    <property type="molecule type" value="mRNA"/>
</dbReference>
<dbReference type="EMBL" id="AY093791">
    <property type="protein sequence ID" value="AAM10407.1"/>
    <property type="molecule type" value="mRNA"/>
</dbReference>
<dbReference type="EMBL" id="AK221155">
    <property type="protein sequence ID" value="BAD95179.1"/>
    <property type="molecule type" value="mRNA"/>
</dbReference>
<dbReference type="PIR" id="F84714">
    <property type="entry name" value="F84714"/>
</dbReference>
<dbReference type="RefSeq" id="NP_001323510.1">
    <property type="nucleotide sequence ID" value="NM_001336310.1"/>
</dbReference>
<dbReference type="RefSeq" id="NP_001323511.1">
    <property type="nucleotide sequence ID" value="NM_001336311.1"/>
</dbReference>
<dbReference type="RefSeq" id="NP_850156.1">
    <property type="nucleotide sequence ID" value="NM_179825.3"/>
</dbReference>
<dbReference type="SMR" id="O80860"/>
<dbReference type="BioGRID" id="2995">
    <property type="interactions" value="8"/>
</dbReference>
<dbReference type="FunCoup" id="O80860">
    <property type="interactions" value="1037"/>
</dbReference>
<dbReference type="IntAct" id="O80860">
    <property type="interactions" value="2"/>
</dbReference>
<dbReference type="STRING" id="3702.O80860"/>
<dbReference type="MEROPS" id="M41.005"/>
<dbReference type="GlyGen" id="O80860">
    <property type="glycosylation" value="1 site"/>
</dbReference>
<dbReference type="iPTMnet" id="O80860"/>
<dbReference type="PaxDb" id="3702-AT2G30950.1"/>
<dbReference type="EnsemblPlants" id="AT2G30950.1">
    <property type="protein sequence ID" value="AT2G30950.1"/>
    <property type="gene ID" value="AT2G30950"/>
</dbReference>
<dbReference type="EnsemblPlants" id="AT2G30950.2">
    <property type="protein sequence ID" value="AT2G30950.2"/>
    <property type="gene ID" value="AT2G30950"/>
</dbReference>
<dbReference type="EnsemblPlants" id="AT2G30950.3">
    <property type="protein sequence ID" value="AT2G30950.3"/>
    <property type="gene ID" value="AT2G30950"/>
</dbReference>
<dbReference type="GeneID" id="817646"/>
<dbReference type="Gramene" id="AT2G30950.1">
    <property type="protein sequence ID" value="AT2G30950.1"/>
    <property type="gene ID" value="AT2G30950"/>
</dbReference>
<dbReference type="Gramene" id="AT2G30950.2">
    <property type="protein sequence ID" value="AT2G30950.2"/>
    <property type="gene ID" value="AT2G30950"/>
</dbReference>
<dbReference type="Gramene" id="AT2G30950.3">
    <property type="protein sequence ID" value="AT2G30950.3"/>
    <property type="gene ID" value="AT2G30950"/>
</dbReference>
<dbReference type="KEGG" id="ath:AT2G30950"/>
<dbReference type="Araport" id="AT2G30950"/>
<dbReference type="TAIR" id="AT2G30950">
    <property type="gene designation" value="VAR2"/>
</dbReference>
<dbReference type="eggNOG" id="KOG0731">
    <property type="taxonomic scope" value="Eukaryota"/>
</dbReference>
<dbReference type="HOGENOM" id="CLU_000688_16_0_1"/>
<dbReference type="InParanoid" id="O80860"/>
<dbReference type="OrthoDB" id="1413014at2759"/>
<dbReference type="PhylomeDB" id="O80860"/>
<dbReference type="BRENDA" id="3.4.24.B20">
    <property type="organism ID" value="399"/>
</dbReference>
<dbReference type="CD-CODE" id="4299E36E">
    <property type="entry name" value="Nucleolus"/>
</dbReference>
<dbReference type="PRO" id="PR:O80860"/>
<dbReference type="Proteomes" id="UP000006548">
    <property type="component" value="Chromosome 2"/>
</dbReference>
<dbReference type="ExpressionAtlas" id="O80860">
    <property type="expression patterns" value="baseline and differential"/>
</dbReference>
<dbReference type="GO" id="GO:0009507">
    <property type="term" value="C:chloroplast"/>
    <property type="evidence" value="ECO:0000314"/>
    <property type="project" value="TAIR"/>
</dbReference>
<dbReference type="GO" id="GO:0009941">
    <property type="term" value="C:chloroplast envelope"/>
    <property type="evidence" value="ECO:0007005"/>
    <property type="project" value="TAIR"/>
</dbReference>
<dbReference type="GO" id="GO:0009534">
    <property type="term" value="C:chloroplast thylakoid"/>
    <property type="evidence" value="ECO:0007005"/>
    <property type="project" value="TAIR"/>
</dbReference>
<dbReference type="GO" id="GO:0009535">
    <property type="term" value="C:chloroplast thylakoid membrane"/>
    <property type="evidence" value="ECO:0000314"/>
    <property type="project" value="TAIR"/>
</dbReference>
<dbReference type="GO" id="GO:0005777">
    <property type="term" value="C:peroxisome"/>
    <property type="evidence" value="ECO:0007005"/>
    <property type="project" value="TAIR"/>
</dbReference>
<dbReference type="GO" id="GO:0009579">
    <property type="term" value="C:thylakoid"/>
    <property type="evidence" value="ECO:0007005"/>
    <property type="project" value="TAIR"/>
</dbReference>
<dbReference type="GO" id="GO:0031977">
    <property type="term" value="C:thylakoid lumen"/>
    <property type="evidence" value="ECO:0007005"/>
    <property type="project" value="TAIR"/>
</dbReference>
<dbReference type="GO" id="GO:0005524">
    <property type="term" value="F:ATP binding"/>
    <property type="evidence" value="ECO:0007669"/>
    <property type="project" value="UniProtKB-KW"/>
</dbReference>
<dbReference type="GO" id="GO:0016887">
    <property type="term" value="F:ATP hydrolysis activity"/>
    <property type="evidence" value="ECO:0007669"/>
    <property type="project" value="InterPro"/>
</dbReference>
<dbReference type="GO" id="GO:0004176">
    <property type="term" value="F:ATP-dependent peptidase activity"/>
    <property type="evidence" value="ECO:0000250"/>
    <property type="project" value="TAIR"/>
</dbReference>
<dbReference type="GO" id="GO:0004222">
    <property type="term" value="F:metalloendopeptidase activity"/>
    <property type="evidence" value="ECO:0007669"/>
    <property type="project" value="InterPro"/>
</dbReference>
<dbReference type="GO" id="GO:0008237">
    <property type="term" value="F:metallopeptidase activity"/>
    <property type="evidence" value="ECO:0000250"/>
    <property type="project" value="TAIR"/>
</dbReference>
<dbReference type="GO" id="GO:0008270">
    <property type="term" value="F:zinc ion binding"/>
    <property type="evidence" value="ECO:0007669"/>
    <property type="project" value="InterPro"/>
</dbReference>
<dbReference type="GO" id="GO:0009658">
    <property type="term" value="P:chloroplast organization"/>
    <property type="evidence" value="ECO:0000316"/>
    <property type="project" value="TAIR"/>
</dbReference>
<dbReference type="GO" id="GO:0010205">
    <property type="term" value="P:photoinhibition"/>
    <property type="evidence" value="ECO:0000315"/>
    <property type="project" value="TAIR"/>
</dbReference>
<dbReference type="GO" id="GO:0048564">
    <property type="term" value="P:photosystem I assembly"/>
    <property type="evidence" value="ECO:0000315"/>
    <property type="project" value="TAIR"/>
</dbReference>
<dbReference type="GO" id="GO:0010206">
    <property type="term" value="P:photosystem II repair"/>
    <property type="evidence" value="ECO:0000315"/>
    <property type="project" value="TAIR"/>
</dbReference>
<dbReference type="GO" id="GO:0030163">
    <property type="term" value="P:protein catabolic process"/>
    <property type="evidence" value="ECO:0000314"/>
    <property type="project" value="TAIR"/>
</dbReference>
<dbReference type="GO" id="GO:0006508">
    <property type="term" value="P:proteolysis"/>
    <property type="evidence" value="ECO:0007669"/>
    <property type="project" value="UniProtKB-KW"/>
</dbReference>
<dbReference type="GO" id="GO:0010304">
    <property type="term" value="P:PSII associated light-harvesting complex II catabolic process"/>
    <property type="evidence" value="ECO:0000304"/>
    <property type="project" value="TAIR"/>
</dbReference>
<dbReference type="GO" id="GO:0072593">
    <property type="term" value="P:reactive oxygen species metabolic process"/>
    <property type="evidence" value="ECO:0000314"/>
    <property type="project" value="TAIR"/>
</dbReference>
<dbReference type="GO" id="GO:0010027">
    <property type="term" value="P:thylakoid membrane organization"/>
    <property type="evidence" value="ECO:0000315"/>
    <property type="project" value="TAIR"/>
</dbReference>
<dbReference type="CDD" id="cd19501">
    <property type="entry name" value="RecA-like_FtsH"/>
    <property type="match status" value="1"/>
</dbReference>
<dbReference type="FunFam" id="1.10.8.60:FF:000001">
    <property type="entry name" value="ATP-dependent zinc metalloprotease FtsH"/>
    <property type="match status" value="1"/>
</dbReference>
<dbReference type="FunFam" id="3.40.50.300:FF:000001">
    <property type="entry name" value="ATP-dependent zinc metalloprotease FtsH"/>
    <property type="match status" value="1"/>
</dbReference>
<dbReference type="FunFam" id="1.20.58.760:FF:000035">
    <property type="entry name" value="ATP-dependent zinc metalloprotease FTSH 6 chloroplastic"/>
    <property type="match status" value="1"/>
</dbReference>
<dbReference type="FunFam" id="3.30.720.210:FF:000002">
    <property type="entry name" value="ATP-dependent zinc metalloprotease FTSH chloroplastic"/>
    <property type="match status" value="1"/>
</dbReference>
<dbReference type="Gene3D" id="1.10.8.60">
    <property type="match status" value="1"/>
</dbReference>
<dbReference type="Gene3D" id="3.30.720.210">
    <property type="match status" value="1"/>
</dbReference>
<dbReference type="Gene3D" id="3.40.50.300">
    <property type="entry name" value="P-loop containing nucleotide triphosphate hydrolases"/>
    <property type="match status" value="1"/>
</dbReference>
<dbReference type="Gene3D" id="1.20.58.760">
    <property type="entry name" value="Peptidase M41"/>
    <property type="match status" value="1"/>
</dbReference>
<dbReference type="HAMAP" id="MF_01458">
    <property type="entry name" value="FtsH"/>
    <property type="match status" value="1"/>
</dbReference>
<dbReference type="InterPro" id="IPR003593">
    <property type="entry name" value="AAA+_ATPase"/>
</dbReference>
<dbReference type="InterPro" id="IPR041569">
    <property type="entry name" value="AAA_lid_3"/>
</dbReference>
<dbReference type="InterPro" id="IPR003959">
    <property type="entry name" value="ATPase_AAA_core"/>
</dbReference>
<dbReference type="InterPro" id="IPR003960">
    <property type="entry name" value="ATPase_AAA_CS"/>
</dbReference>
<dbReference type="InterPro" id="IPR005936">
    <property type="entry name" value="FtsH"/>
</dbReference>
<dbReference type="InterPro" id="IPR027417">
    <property type="entry name" value="P-loop_NTPase"/>
</dbReference>
<dbReference type="InterPro" id="IPR011546">
    <property type="entry name" value="Pept_M41_FtsH_extracell"/>
</dbReference>
<dbReference type="InterPro" id="IPR000642">
    <property type="entry name" value="Peptidase_M41"/>
</dbReference>
<dbReference type="InterPro" id="IPR037219">
    <property type="entry name" value="Peptidase_M41-like"/>
</dbReference>
<dbReference type="NCBIfam" id="TIGR01241">
    <property type="entry name" value="FtsH_fam"/>
    <property type="match status" value="1"/>
</dbReference>
<dbReference type="PANTHER" id="PTHR23076:SF139">
    <property type="entry name" value="ATP-DEPENDENT ZINC METALLOPROTEASE FTSH 2, CHLOROPLASTIC"/>
    <property type="match status" value="1"/>
</dbReference>
<dbReference type="PANTHER" id="PTHR23076">
    <property type="entry name" value="METALLOPROTEASE M41 FTSH"/>
    <property type="match status" value="1"/>
</dbReference>
<dbReference type="Pfam" id="PF00004">
    <property type="entry name" value="AAA"/>
    <property type="match status" value="1"/>
</dbReference>
<dbReference type="Pfam" id="PF17862">
    <property type="entry name" value="AAA_lid_3"/>
    <property type="match status" value="1"/>
</dbReference>
<dbReference type="Pfam" id="PF06480">
    <property type="entry name" value="FtsH_ext"/>
    <property type="match status" value="1"/>
</dbReference>
<dbReference type="Pfam" id="PF01434">
    <property type="entry name" value="Peptidase_M41"/>
    <property type="match status" value="1"/>
</dbReference>
<dbReference type="SMART" id="SM00382">
    <property type="entry name" value="AAA"/>
    <property type="match status" value="1"/>
</dbReference>
<dbReference type="SUPFAM" id="SSF140990">
    <property type="entry name" value="FtsH protease domain-like"/>
    <property type="match status" value="1"/>
</dbReference>
<dbReference type="SUPFAM" id="SSF52540">
    <property type="entry name" value="P-loop containing nucleoside triphosphate hydrolases"/>
    <property type="match status" value="1"/>
</dbReference>
<dbReference type="PROSITE" id="PS00674">
    <property type="entry name" value="AAA"/>
    <property type="match status" value="1"/>
</dbReference>
<sequence>MAASSACLVGNGLSVNTTTKQRLSKHFSGRQTSFSSVIRTSKVNVVKASLDGKKKQEGRRDFLKILLGNAGVGLVASGKANADEQGVSSSRMSYSRFLEYLDKDRVNKVDLYENGTIAIVEAVSPELGNRVERVRVQLPGLSQELLQKLRAKNIDFAAHNAQEDQGSVLFNLIGNLAFPALLIGGLFLLSRRSGGGMGGPGGPGNPLQFGQSKAKFQMEPNTGVTFDDVAGVDEAKQDFMEVVEFLKKPERFTAVGAKIPKGVLLIGPPGTGKTLLAKAIAGEAGVPFFSISGSEFVEMFVGVGASRVRDLFKKAKENAPCIVFVDEIDAVGRQRGTGIGGGNDEREQTLNQLLTEMDGFEGNTGVIVVAATNRADILDSALLRPGRFDRQVSVDVPDVKGRTDILKVHAGNKKFDNDVSLEIIAMRTPGFSGADLANLLNEAAILAGRRARTSISSKEIDDSIDRIVAGMEGTVMTDGKSKSLVAYHEVGHAVCGTLTPGHDAVQKVTLIPRGQARGLTWFIPSDDPTLISKQQLFARIVGGLGGRAAEEIIFGDSEVTTGAVGDLQQITGLARQMVTTFGMSDIGPWSLMDSSAQSDVIMRMMARNSMSEKLAEDIDSAVKKLSDSAYEIALSHIKNNREAMDKLVEVLLEKETIGGDEFRAILSEFTEIPPENRVPSSTTTTPASAPTPAAV</sequence>
<name>FTSH2_ARATH</name>
<gene>
    <name type="primary">FTSH2</name>
    <name type="synonym">VAR2</name>
    <name type="ordered locus">At2g30950</name>
    <name type="ORF">F7F1.16</name>
</gene>
<proteinExistence type="evidence at protein level"/>
<accession>O80860</accession>
<accession>Q56Z14</accession>
<accession>Q94AZ0</accession>
<reference key="1">
    <citation type="journal article" date="2000" name="Plant J.">
        <title>Mutations in the Arabidopsis VAR2 locus cause leaf variegation due to the loss of a chloroplast FtsH protease.</title>
        <authorList>
            <person name="Chen M."/>
            <person name="Choi Y."/>
            <person name="Voytas D.F."/>
            <person name="Rodermel S."/>
        </authorList>
    </citation>
    <scope>NUCLEOTIDE SEQUENCE [MRNA]</scope>
    <scope>FUNCTION</scope>
    <scope>DISRUPTION PHENOTYPE</scope>
</reference>
<reference key="2">
    <citation type="journal article" date="1999" name="Nature">
        <title>Sequence and analysis of chromosome 2 of the plant Arabidopsis thaliana.</title>
        <authorList>
            <person name="Lin X."/>
            <person name="Kaul S."/>
            <person name="Rounsley S.D."/>
            <person name="Shea T.P."/>
            <person name="Benito M.-I."/>
            <person name="Town C.D."/>
            <person name="Fujii C.Y."/>
            <person name="Mason T.M."/>
            <person name="Bowman C.L."/>
            <person name="Barnstead M.E."/>
            <person name="Feldblyum T.V."/>
            <person name="Buell C.R."/>
            <person name="Ketchum K.A."/>
            <person name="Lee J.J."/>
            <person name="Ronning C.M."/>
            <person name="Koo H.L."/>
            <person name="Moffat K.S."/>
            <person name="Cronin L.A."/>
            <person name="Shen M."/>
            <person name="Pai G."/>
            <person name="Van Aken S."/>
            <person name="Umayam L."/>
            <person name="Tallon L.J."/>
            <person name="Gill J.E."/>
            <person name="Adams M.D."/>
            <person name="Carrera A.J."/>
            <person name="Creasy T.H."/>
            <person name="Goodman H.M."/>
            <person name="Somerville C.R."/>
            <person name="Copenhaver G.P."/>
            <person name="Preuss D."/>
            <person name="Nierman W.C."/>
            <person name="White O."/>
            <person name="Eisen J.A."/>
            <person name="Salzberg S.L."/>
            <person name="Fraser C.M."/>
            <person name="Venter J.C."/>
        </authorList>
    </citation>
    <scope>NUCLEOTIDE SEQUENCE [LARGE SCALE GENOMIC DNA]</scope>
    <source>
        <strain>cv. Columbia</strain>
    </source>
</reference>
<reference key="3">
    <citation type="journal article" date="2017" name="Plant J.">
        <title>Araport11: a complete reannotation of the Arabidopsis thaliana reference genome.</title>
        <authorList>
            <person name="Cheng C.Y."/>
            <person name="Krishnakumar V."/>
            <person name="Chan A.P."/>
            <person name="Thibaud-Nissen F."/>
            <person name="Schobel S."/>
            <person name="Town C.D."/>
        </authorList>
    </citation>
    <scope>GENOME REANNOTATION</scope>
    <source>
        <strain>cv. Columbia</strain>
    </source>
</reference>
<reference key="4">
    <citation type="journal article" date="2003" name="Science">
        <title>Empirical analysis of transcriptional activity in the Arabidopsis genome.</title>
        <authorList>
            <person name="Yamada K."/>
            <person name="Lim J."/>
            <person name="Dale J.M."/>
            <person name="Chen H."/>
            <person name="Shinn P."/>
            <person name="Palm C.J."/>
            <person name="Southwick A.M."/>
            <person name="Wu H.C."/>
            <person name="Kim C.J."/>
            <person name="Nguyen M."/>
            <person name="Pham P.K."/>
            <person name="Cheuk R.F."/>
            <person name="Karlin-Newmann G."/>
            <person name="Liu S.X."/>
            <person name="Lam B."/>
            <person name="Sakano H."/>
            <person name="Wu T."/>
            <person name="Yu G."/>
            <person name="Miranda M."/>
            <person name="Quach H.L."/>
            <person name="Tripp M."/>
            <person name="Chang C.H."/>
            <person name="Lee J.M."/>
            <person name="Toriumi M.J."/>
            <person name="Chan M.M."/>
            <person name="Tang C.C."/>
            <person name="Onodera C.S."/>
            <person name="Deng J.M."/>
            <person name="Akiyama K."/>
            <person name="Ansari Y."/>
            <person name="Arakawa T."/>
            <person name="Banh J."/>
            <person name="Banno F."/>
            <person name="Bowser L."/>
            <person name="Brooks S.Y."/>
            <person name="Carninci P."/>
            <person name="Chao Q."/>
            <person name="Choy N."/>
            <person name="Enju A."/>
            <person name="Goldsmith A.D."/>
            <person name="Gurjal M."/>
            <person name="Hansen N.F."/>
            <person name="Hayashizaki Y."/>
            <person name="Johnson-Hopson C."/>
            <person name="Hsuan V.W."/>
            <person name="Iida K."/>
            <person name="Karnes M."/>
            <person name="Khan S."/>
            <person name="Koesema E."/>
            <person name="Ishida J."/>
            <person name="Jiang P.X."/>
            <person name="Jones T."/>
            <person name="Kawai J."/>
            <person name="Kamiya A."/>
            <person name="Meyers C."/>
            <person name="Nakajima M."/>
            <person name="Narusaka M."/>
            <person name="Seki M."/>
            <person name="Sakurai T."/>
            <person name="Satou M."/>
            <person name="Tamse R."/>
            <person name="Vaysberg M."/>
            <person name="Wallender E.K."/>
            <person name="Wong C."/>
            <person name="Yamamura Y."/>
            <person name="Yuan S."/>
            <person name="Shinozaki K."/>
            <person name="Davis R.W."/>
            <person name="Theologis A."/>
            <person name="Ecker J.R."/>
        </authorList>
    </citation>
    <scope>NUCLEOTIDE SEQUENCE [LARGE SCALE MRNA] OF 306-695</scope>
    <source>
        <strain>cv. Columbia</strain>
    </source>
</reference>
<reference key="5">
    <citation type="submission" date="2005-03" db="EMBL/GenBank/DDBJ databases">
        <title>Large-scale analysis of RIKEN Arabidopsis full-length (RAFL) cDNAs.</title>
        <authorList>
            <person name="Totoki Y."/>
            <person name="Seki M."/>
            <person name="Ishida J."/>
            <person name="Nakajima M."/>
            <person name="Enju A."/>
            <person name="Kamiya A."/>
            <person name="Narusaka M."/>
            <person name="Shin-i T."/>
            <person name="Nakagawa M."/>
            <person name="Sakamoto N."/>
            <person name="Oishi K."/>
            <person name="Kohara Y."/>
            <person name="Kobayashi M."/>
            <person name="Toyoda A."/>
            <person name="Sakaki Y."/>
            <person name="Sakurai T."/>
            <person name="Iida K."/>
            <person name="Akiyama K."/>
            <person name="Satou M."/>
            <person name="Toyoda T."/>
            <person name="Konagaya A."/>
            <person name="Carninci P."/>
            <person name="Kawai J."/>
            <person name="Hayashizaki Y."/>
            <person name="Shinozaki K."/>
        </authorList>
    </citation>
    <scope>NUCLEOTIDE SEQUENCE [LARGE SCALE MRNA] OF 499-695</scope>
    <source>
        <strain>cv. Columbia</strain>
    </source>
</reference>
<reference key="6">
    <citation type="journal article" date="2002" name="J. Biol. Chem.">
        <title>Proteome map of the chloroplast lumen of Arabidopsis thaliana.</title>
        <authorList>
            <person name="Schubert M."/>
            <person name="Petersson U.A."/>
            <person name="Haas B.J."/>
            <person name="Funk C."/>
            <person name="Schroeder W.P."/>
            <person name="Kieselbach T."/>
        </authorList>
    </citation>
    <scope>PROTEIN SEQUENCE OF 209-216</scope>
    <scope>SUBCELLULAR LOCATION</scope>
</reference>
<reference key="7">
    <citation type="journal article" date="2001" name="Plant Physiol.">
        <title>Chloroplast and mitochondrial proteases in Arabidopsis. A proposed nomenclature.</title>
        <authorList>
            <person name="Adam Z."/>
            <person name="Adamska I."/>
            <person name="Nakabayashi K."/>
            <person name="Ostersetzer O."/>
            <person name="Haussuhl K."/>
            <person name="Manuell A."/>
            <person name="Zheng B."/>
            <person name="Vallon O."/>
            <person name="Rodermel S.R."/>
            <person name="Shinozaki K."/>
            <person name="Clarke A.K."/>
        </authorList>
    </citation>
    <scope>GENE FAMILY</scope>
    <scope>NOMENCLATURE</scope>
</reference>
<reference key="8">
    <citation type="journal article" date="2002" name="J. Biol. Chem.">
        <title>A critical role for the Var2 FtsH homologue of Arabidopsis thaliana in the photosystem II repair cycle in vivo.</title>
        <authorList>
            <person name="Bailey S."/>
            <person name="Thompson E."/>
            <person name="Nixon P.J."/>
            <person name="Horton P."/>
            <person name="Mullineaux C.W."/>
            <person name="Robinson C."/>
            <person name="Mann N.H."/>
        </authorList>
    </citation>
    <scope>FUNCTION</scope>
    <scope>CONSERVED LUMENAL DOMAIN</scope>
</reference>
<reference key="9">
    <citation type="journal article" date="2003" name="Plant Cell">
        <title>Coordinated regulation and complex formation of yellow variegated1 and yellow variegated2, chloroplastic FtsH metalloproteases involved in the repair cycle of photosystem II in Arabidopsis thylakoid membranes.</title>
        <authorList>
            <person name="Sakamoto W."/>
            <person name="Zaltsman A."/>
            <person name="Adam Z."/>
            <person name="Takahashi Y."/>
        </authorList>
    </citation>
    <scope>FUNCTION</scope>
    <scope>INTERACTION WITH FTSH5</scope>
    <scope>SUBCELLULAR LOCATION</scope>
</reference>
<reference key="10">
    <citation type="journal article" date="2004" name="Plant J.">
        <title>The Arabidopsis FtsH metalloprotease gene family: interchangeability of subunits in chloroplast oligomeric complexes.</title>
        <authorList>
            <person name="Yu F."/>
            <person name="Park S."/>
            <person name="Rodermel S.R."/>
        </authorList>
    </citation>
    <scope>SUBUNIT</scope>
    <scope>TISSUE SPECIFICITY</scope>
    <scope>GENE FAMILY</scope>
    <scope>NOMENCLATURE</scope>
</reference>
<reference key="11">
    <citation type="journal article" date="2004" name="Plant Physiol.">
        <title>Expression in multigene families. Analysis of chloroplast and mitochondrial proteases.</title>
        <authorList>
            <person name="Sinvany-Villalobo G."/>
            <person name="Davydov O."/>
            <person name="Ben-Ari G."/>
            <person name="Zaltsman A."/>
            <person name="Raskind A."/>
            <person name="Adam Z."/>
        </authorList>
    </citation>
    <scope>INDUCTION BY COLD AND HIGH LIGHT</scope>
</reference>
<reference key="12">
    <citation type="journal article" date="2005" name="Plant J.">
        <title>Developmental and light effects on the accumulation of FtsH protease in Arabidopsis chloroplasts -- implications for thylakoid formation and photosystem II maintenance.</title>
        <authorList>
            <person name="Zaltsman A."/>
            <person name="Feder A."/>
            <person name="Adam Z."/>
        </authorList>
    </citation>
    <scope>DEVELOPMENTAL STAGE</scope>
</reference>
<reference key="13">
    <citation type="journal article" date="2005" name="Plant Cell">
        <title>Two types of FtsH protease subunits are required for chloroplast biogenesis and Photosystem II repair in Arabidopsis.</title>
        <authorList>
            <person name="Zaltsman A."/>
            <person name="Ori N."/>
            <person name="Adam Z."/>
        </authorList>
    </citation>
    <scope>SUBUNIT</scope>
</reference>
<reference key="14">
    <citation type="journal article" date="2006" name="Plant J.">
        <title>FtsH11 protease plays a critical role in Arabidopsis thermotolerance.</title>
        <authorList>
            <person name="Chen J."/>
            <person name="Burke J.J."/>
            <person name="Velten J."/>
            <person name="Xin Z."/>
        </authorList>
    </citation>
    <scope>FUNCTION</scope>
</reference>
<reference key="15">
    <citation type="journal article" date="2007" name="Plant J.">
        <title>The E3 ligase AtCHIP ubiquitylates FtsH1, a component of the chloroplast FtsH protease, and affects protein degradation in chloroplasts.</title>
        <authorList>
            <person name="Shen G."/>
            <person name="Adam Z."/>
            <person name="Zhang H."/>
        </authorList>
    </citation>
    <scope>INTERACTION WITH CHIP</scope>
    <scope>UBIQUITINATION</scope>
</reference>
<reference key="16">
    <citation type="journal article" date="2008" name="PLoS ONE">
        <title>Sorting signals, N-terminal modifications and abundance of the chloroplast proteome.</title>
        <authorList>
            <person name="Zybailov B."/>
            <person name="Rutschow H."/>
            <person name="Friso G."/>
            <person name="Rudella A."/>
            <person name="Emanuelsson O."/>
            <person name="Sun Q."/>
            <person name="van Wijk K.J."/>
        </authorList>
    </citation>
    <scope>IDENTIFICATION BY MASS SPECTROMETRY</scope>
    <scope>SUBCELLULAR LOCATION [LARGE SCALE ANALYSIS]</scope>
</reference>
<evidence type="ECO:0000250" key="1"/>
<evidence type="ECO:0000255" key="2"/>
<evidence type="ECO:0000256" key="3">
    <source>
        <dbReference type="SAM" id="MobiDB-lite"/>
    </source>
</evidence>
<evidence type="ECO:0000269" key="4">
    <source>
    </source>
</evidence>
<evidence type="ECO:0000269" key="5">
    <source>
    </source>
</evidence>
<evidence type="ECO:0000269" key="6">
    <source>
    </source>
</evidence>
<evidence type="ECO:0000269" key="7">
    <source>
    </source>
</evidence>
<evidence type="ECO:0000269" key="8">
    <source>
    </source>
</evidence>
<evidence type="ECO:0000269" key="9">
    <source>
    </source>
</evidence>
<evidence type="ECO:0000269" key="10">
    <source>
    </source>
</evidence>
<evidence type="ECO:0000269" key="11">
    <source>
    </source>
</evidence>
<evidence type="ECO:0000269" key="12">
    <source>
    </source>
</evidence>
<evidence type="ECO:0000269" key="13">
    <source>
    </source>
</evidence>
<evidence type="ECO:0000269" key="14">
    <source>
    </source>
</evidence>
<evidence type="ECO:0000305" key="15"/>
<protein>
    <recommendedName>
        <fullName>ATP-dependent zinc metalloprotease FTSH 2, chloroplastic</fullName>
        <shortName>AtFTSH2</shortName>
        <ecNumber>3.4.24.-</ecNumber>
    </recommendedName>
    <alternativeName>
        <fullName>Protein VARIEGATED 2</fullName>
    </alternativeName>
</protein>
<comment type="function">
    <text evidence="4 5 7 12">Part of a complex that function as an ATP-dependent zinc metallopeptidase. Involved in the thylakoid formation and in the removal of damaged D1 in the photosystem II, preventing cell death under high-intensity light conditions, but not involved in thermotolerance.</text>
</comment>
<comment type="cofactor">
    <cofactor evidence="1">
        <name>Zn(2+)</name>
        <dbReference type="ChEBI" id="CHEBI:29105"/>
    </cofactor>
    <text evidence="1">Binds 1 zinc ion per subunit.</text>
</comment>
<comment type="subunit">
    <text evidence="7 8 11 13">Interacts with CHIP and FTSH5. Heterohexamers with FTSH1, FTSH5 and FTSH8. May also form homooligomers.</text>
</comment>
<comment type="subcellular location">
    <subcellularLocation>
        <location evidence="6 7 14">Plastid</location>
        <location evidence="6 7 14">Chloroplast thylakoid membrane</location>
        <topology evidence="6 7">Single-pass membrane protein</topology>
        <orientation evidence="6 7">Stromal side</orientation>
    </subcellularLocation>
</comment>
<comment type="tissue specificity">
    <text evidence="8">Expressed in cotyledons, cauline and rosette leaves, stems, sepals, flovers and siliques. Very low in roots.</text>
</comment>
<comment type="developmental stage">
    <text evidence="10">Low expression in cotyledons, increasing with leaves development.</text>
</comment>
<comment type="induction">
    <text evidence="9">By cold and high light.</text>
</comment>
<comment type="domain">
    <text>The conserved lumenal (CL) domain (83-161) is present only in some FtsH homologs from organisms performing oxygenic photosynthesis.</text>
</comment>
<comment type="PTM">
    <text evidence="13">The FTSH2 precursor is ubiquitinated by CHIP in the cytoplasm.</text>
</comment>
<comment type="disruption phenotype">
    <text evidence="4">Leaf-variegated. Mutations can be complemented by overexpression of FTSH8. The presence of both FTSH1 or FTSH5 (subunit type A) and FTSH2 or FTSH8 (subunit type B) is essential for an active complex formation.</text>
</comment>
<comment type="similarity">
    <text evidence="15">In the N-terminal section; belongs to the AAA ATPase family.</text>
</comment>
<comment type="similarity">
    <text evidence="15">In the C-terminal section; belongs to the peptidase M41 family.</text>
</comment>
<comment type="sequence caution" evidence="15">
    <conflict type="erroneous initiation">
        <sequence resource="EMBL-CDS" id="AAK73957"/>
    </conflict>
</comment>